<gene>
    <name evidence="1" type="primary">mobA</name>
    <name type="ordered locus">PTH_1127</name>
</gene>
<protein>
    <recommendedName>
        <fullName evidence="1">Probable molybdenum cofactor guanylyltransferase</fullName>
        <shortName evidence="1">MoCo guanylyltransferase</shortName>
        <ecNumber evidence="1">2.7.7.77</ecNumber>
    </recommendedName>
    <alternativeName>
        <fullName evidence="1">GTP:molybdopterin guanylyltransferase</fullName>
    </alternativeName>
    <alternativeName>
        <fullName evidence="1">Mo-MPT guanylyltransferase</fullName>
    </alternativeName>
    <alternativeName>
        <fullName evidence="1">Molybdopterin guanylyltransferase</fullName>
    </alternativeName>
    <alternativeName>
        <fullName evidence="1">Molybdopterin-guanine dinucleotide synthase</fullName>
        <shortName evidence="1">MGD synthase</shortName>
    </alternativeName>
</protein>
<evidence type="ECO:0000255" key="1">
    <source>
        <dbReference type="HAMAP-Rule" id="MF_00316"/>
    </source>
</evidence>
<reference key="1">
    <citation type="journal article" date="2008" name="Genome Res.">
        <title>The genome of Pelotomaculum thermopropionicum reveals niche-associated evolution in anaerobic microbiota.</title>
        <authorList>
            <person name="Kosaka T."/>
            <person name="Kato S."/>
            <person name="Shimoyama T."/>
            <person name="Ishii S."/>
            <person name="Abe T."/>
            <person name="Watanabe K."/>
        </authorList>
    </citation>
    <scope>NUCLEOTIDE SEQUENCE [LARGE SCALE GENOMIC DNA]</scope>
    <source>
        <strain>DSM 13744 / JCM 10971 / SI</strain>
    </source>
</reference>
<accession>A5D369</accession>
<feature type="chain" id="PRO_1000079110" description="Probable molybdenum cofactor guanylyltransferase">
    <location>
        <begin position="1"/>
        <end position="205"/>
    </location>
</feature>
<feature type="binding site" evidence="1">
    <location>
        <begin position="9"/>
        <end position="11"/>
    </location>
    <ligand>
        <name>GTP</name>
        <dbReference type="ChEBI" id="CHEBI:37565"/>
    </ligand>
</feature>
<feature type="binding site" evidence="1">
    <location>
        <position position="21"/>
    </location>
    <ligand>
        <name>GTP</name>
        <dbReference type="ChEBI" id="CHEBI:37565"/>
    </ligand>
</feature>
<feature type="binding site" evidence="1">
    <location>
        <position position="66"/>
    </location>
    <ligand>
        <name>GTP</name>
        <dbReference type="ChEBI" id="CHEBI:37565"/>
    </ligand>
</feature>
<feature type="binding site" evidence="1">
    <location>
        <position position="95"/>
    </location>
    <ligand>
        <name>GTP</name>
        <dbReference type="ChEBI" id="CHEBI:37565"/>
    </ligand>
</feature>
<feature type="binding site" evidence="1">
    <location>
        <position position="95"/>
    </location>
    <ligand>
        <name>Mg(2+)</name>
        <dbReference type="ChEBI" id="CHEBI:18420"/>
    </ligand>
</feature>
<proteinExistence type="inferred from homology"/>
<keyword id="KW-0963">Cytoplasm</keyword>
<keyword id="KW-0342">GTP-binding</keyword>
<keyword id="KW-0460">Magnesium</keyword>
<keyword id="KW-0479">Metal-binding</keyword>
<keyword id="KW-0501">Molybdenum cofactor biosynthesis</keyword>
<keyword id="KW-0547">Nucleotide-binding</keyword>
<keyword id="KW-1185">Reference proteome</keyword>
<keyword id="KW-0808">Transferase</keyword>
<name>MOBA_PELTS</name>
<sequence>MLQATGVILAGGRSRRMGQEKALLEVGREAMIRRVAGVLKEVFAEVIISGGVEENGLRLGLRVVPDLIAGGGPLSGIHAALCGAAFAKCLVVACDMPFICPELARYMMEQSEGYDVAVPRHGQHLQPLFAVYSKGCIRAIEESLRAHKCKVIDFYPLVRVNYVSEENLRALADIEVAFFNVNTPSDLVKARVMAENSRTGRVWLV</sequence>
<comment type="function">
    <text evidence="1">Transfers a GMP moiety from GTP to Mo-molybdopterin (Mo-MPT) cofactor (Moco or molybdenum cofactor) to form Mo-molybdopterin guanine dinucleotide (Mo-MGD) cofactor.</text>
</comment>
<comment type="catalytic activity">
    <reaction evidence="1">
        <text>Mo-molybdopterin + GTP + H(+) = Mo-molybdopterin guanine dinucleotide + diphosphate</text>
        <dbReference type="Rhea" id="RHEA:34243"/>
        <dbReference type="ChEBI" id="CHEBI:15378"/>
        <dbReference type="ChEBI" id="CHEBI:33019"/>
        <dbReference type="ChEBI" id="CHEBI:37565"/>
        <dbReference type="ChEBI" id="CHEBI:71302"/>
        <dbReference type="ChEBI" id="CHEBI:71310"/>
        <dbReference type="EC" id="2.7.7.77"/>
    </reaction>
</comment>
<comment type="cofactor">
    <cofactor evidence="1">
        <name>Mg(2+)</name>
        <dbReference type="ChEBI" id="CHEBI:18420"/>
    </cofactor>
</comment>
<comment type="subcellular location">
    <subcellularLocation>
        <location evidence="1">Cytoplasm</location>
    </subcellularLocation>
</comment>
<comment type="domain">
    <text evidence="1">The N-terminal domain determines nucleotide recognition and specific binding, while the C-terminal domain determines the specific binding to the target protein.</text>
</comment>
<comment type="similarity">
    <text evidence="1">Belongs to the MobA family.</text>
</comment>
<organism>
    <name type="scientific">Pelotomaculum thermopropionicum (strain DSM 13744 / JCM 10971 / SI)</name>
    <dbReference type="NCBI Taxonomy" id="370438"/>
    <lineage>
        <taxon>Bacteria</taxon>
        <taxon>Bacillati</taxon>
        <taxon>Bacillota</taxon>
        <taxon>Clostridia</taxon>
        <taxon>Eubacteriales</taxon>
        <taxon>Desulfotomaculaceae</taxon>
        <taxon>Pelotomaculum</taxon>
    </lineage>
</organism>
<dbReference type="EC" id="2.7.7.77" evidence="1"/>
<dbReference type="EMBL" id="AP009389">
    <property type="protein sequence ID" value="BAF59308.1"/>
    <property type="molecule type" value="Genomic_DNA"/>
</dbReference>
<dbReference type="SMR" id="A5D369"/>
<dbReference type="STRING" id="370438.PTH_1127"/>
<dbReference type="KEGG" id="pth:PTH_1127"/>
<dbReference type="eggNOG" id="COG0746">
    <property type="taxonomic scope" value="Bacteria"/>
</dbReference>
<dbReference type="HOGENOM" id="CLU_055597_2_1_9"/>
<dbReference type="Proteomes" id="UP000006556">
    <property type="component" value="Chromosome"/>
</dbReference>
<dbReference type="GO" id="GO:0005737">
    <property type="term" value="C:cytoplasm"/>
    <property type="evidence" value="ECO:0007669"/>
    <property type="project" value="UniProtKB-SubCell"/>
</dbReference>
<dbReference type="GO" id="GO:0005525">
    <property type="term" value="F:GTP binding"/>
    <property type="evidence" value="ECO:0007669"/>
    <property type="project" value="UniProtKB-UniRule"/>
</dbReference>
<dbReference type="GO" id="GO:0046872">
    <property type="term" value="F:metal ion binding"/>
    <property type="evidence" value="ECO:0007669"/>
    <property type="project" value="UniProtKB-KW"/>
</dbReference>
<dbReference type="GO" id="GO:0061603">
    <property type="term" value="F:molybdenum cofactor guanylyltransferase activity"/>
    <property type="evidence" value="ECO:0007669"/>
    <property type="project" value="UniProtKB-EC"/>
</dbReference>
<dbReference type="GO" id="GO:1902758">
    <property type="term" value="P:bis(molybdopterin guanine dinucleotide)molybdenum biosynthetic process"/>
    <property type="evidence" value="ECO:0007669"/>
    <property type="project" value="TreeGrafter"/>
</dbReference>
<dbReference type="CDD" id="cd02503">
    <property type="entry name" value="MobA"/>
    <property type="match status" value="1"/>
</dbReference>
<dbReference type="Gene3D" id="3.90.550.10">
    <property type="entry name" value="Spore Coat Polysaccharide Biosynthesis Protein SpsA, Chain A"/>
    <property type="match status" value="1"/>
</dbReference>
<dbReference type="HAMAP" id="MF_00316">
    <property type="entry name" value="MobA"/>
    <property type="match status" value="1"/>
</dbReference>
<dbReference type="InterPro" id="IPR025877">
    <property type="entry name" value="MobA-like_NTP_Trfase"/>
</dbReference>
<dbReference type="InterPro" id="IPR013482">
    <property type="entry name" value="Molybde_CF_guanTrfase"/>
</dbReference>
<dbReference type="InterPro" id="IPR029044">
    <property type="entry name" value="Nucleotide-diphossugar_trans"/>
</dbReference>
<dbReference type="PANTHER" id="PTHR19136">
    <property type="entry name" value="MOLYBDENUM COFACTOR GUANYLYLTRANSFERASE"/>
    <property type="match status" value="1"/>
</dbReference>
<dbReference type="PANTHER" id="PTHR19136:SF81">
    <property type="entry name" value="MOLYBDENUM COFACTOR GUANYLYLTRANSFERASE"/>
    <property type="match status" value="1"/>
</dbReference>
<dbReference type="Pfam" id="PF12804">
    <property type="entry name" value="NTP_transf_3"/>
    <property type="match status" value="1"/>
</dbReference>
<dbReference type="SUPFAM" id="SSF53448">
    <property type="entry name" value="Nucleotide-diphospho-sugar transferases"/>
    <property type="match status" value="1"/>
</dbReference>